<protein>
    <recommendedName>
        <fullName>General transcription and DNA repair factor IIH helicase/translocase subunit XPB</fullName>
        <shortName>TFIIH subunit XPB</shortName>
        <ecNumber evidence="7">5.6.2.4</ecNumber>
    </recommendedName>
    <alternativeName>
        <fullName evidence="7">DNA 3'-5' helicase/translocase XPB</fullName>
    </alternativeName>
    <alternativeName>
        <fullName>DNA excision repair protein ERCC-3</fullName>
    </alternativeName>
</protein>
<keyword id="KW-0067">ATP-binding</keyword>
<keyword id="KW-0227">DNA damage</keyword>
<keyword id="KW-0234">DNA repair</keyword>
<keyword id="KW-0238">DNA-binding</keyword>
<keyword id="KW-0347">Helicase</keyword>
<keyword id="KW-0378">Hydrolase</keyword>
<keyword id="KW-0413">Isomerase</keyword>
<keyword id="KW-0547">Nucleotide-binding</keyword>
<keyword id="KW-0539">Nucleus</keyword>
<keyword id="KW-0597">Phosphoprotein</keyword>
<keyword id="KW-1185">Reference proteome</keyword>
<keyword id="KW-0804">Transcription</keyword>
<keyword id="KW-0805">Transcription regulation</keyword>
<accession>Q4G005</accession>
<name>ERCC3_RAT</name>
<sequence length="782" mass="89099">MGKRDRVDRDKKKSKKRQYEEEEEDEDDAPGNESQEAVPSAAGKQVDESSTKVDEYGAKDYRQQMPLKGDHTSRPLWVAPDGHIFLEAFSPVYKYAQDFLVAIAEPVCRPTHVHEYKLTAYSLYAAVSVGLQTSDITEYLRKLSKTGVPDGIIQFIKLCTVSYGKVKLVLKHNRYFVESSHPDVIQHLLQDPVIRECRLRNAEGEATELITETFTSKSAISKTVEGSGGASTSQGVDAQAKSDIPKDLFDFYEQMDKDEEEEEETQTVSFEVKQEMIEELQKRCICLEYPLLAEYDFRNDSLNPDINIDLKPTAVLRPYQEKSLRKMFGNGRARSGVIVLPCGAGKSLVGVTAACTVRKRCLVLGNSAVSVEQWKAQFKMWSTIDDSQICRFTSDAKDKPIGCSIAISTYSMLGHTTKRSWEAERVMEWLKTQEWGLMILDEVHTIPAKMFRRVLTIVQAHCKLGLTATLVREDDKIVDLNFLIGPKLYEANWMELQNNGYIAKVQCAEVWCPMSPEFYREYVAIKTKKRILLYTMNPNKFRACQFLIKFHERRNDKIIVFADNVFALKEYAIRLNKPYIYGPTSQGERMQILQNFKHNPKINTIFISKVGDTSFDLPEANVLIQISSHGGSRRQEAQRLGRVLRAKKGMVAEEYNAFFYSLVSQDTQEMAYSTKRQRFLVDQGYSFKVITKLAGMEEEELAFSTKEEQQQLLQKVLAATDLDAEEEVVAGEFGSRSGQASRRFGTMSSLSGADDTVYMEYHSSRNKASTKHVHPLFKRFRK</sequence>
<dbReference type="EC" id="5.6.2.4" evidence="7"/>
<dbReference type="EMBL" id="BC098856">
    <property type="protein sequence ID" value="AAH98856.1"/>
    <property type="molecule type" value="mRNA"/>
</dbReference>
<dbReference type="RefSeq" id="NP_001026814.1">
    <property type="nucleotide sequence ID" value="NM_001031644.1"/>
</dbReference>
<dbReference type="SMR" id="Q4G005"/>
<dbReference type="FunCoup" id="Q4G005">
    <property type="interactions" value="4261"/>
</dbReference>
<dbReference type="STRING" id="10116.ENSRNOP00000018422"/>
<dbReference type="iPTMnet" id="Q4G005"/>
<dbReference type="PhosphoSitePlus" id="Q4G005"/>
<dbReference type="PaxDb" id="10116-ENSRNOP00000018422"/>
<dbReference type="Ensembl" id="ENSRNOT00000018422.7">
    <property type="protein sequence ID" value="ENSRNOP00000018422.5"/>
    <property type="gene ID" value="ENSRNOG00000013180.7"/>
</dbReference>
<dbReference type="GeneID" id="291703"/>
<dbReference type="KEGG" id="rno:291703"/>
<dbReference type="UCSC" id="RGD:1307139">
    <property type="organism name" value="rat"/>
</dbReference>
<dbReference type="AGR" id="RGD:1307139"/>
<dbReference type="CTD" id="2071"/>
<dbReference type="RGD" id="1307139">
    <property type="gene designation" value="Ercc3"/>
</dbReference>
<dbReference type="eggNOG" id="KOG1123">
    <property type="taxonomic scope" value="Eukaryota"/>
</dbReference>
<dbReference type="GeneTree" id="ENSGT00390000002204"/>
<dbReference type="HOGENOM" id="CLU_008213_0_0_1"/>
<dbReference type="InParanoid" id="Q4G005"/>
<dbReference type="OMA" id="RCQEIDY"/>
<dbReference type="OrthoDB" id="10262986at2759"/>
<dbReference type="PhylomeDB" id="Q4G005"/>
<dbReference type="TreeFam" id="TF101233"/>
<dbReference type="Reactome" id="R-RNO-112382">
    <property type="pathway name" value="Formation of RNA Pol II elongation complex"/>
</dbReference>
<dbReference type="Reactome" id="R-RNO-113418">
    <property type="pathway name" value="Formation of the Early Elongation Complex"/>
</dbReference>
<dbReference type="Reactome" id="R-RNO-5696395">
    <property type="pathway name" value="Formation of Incision Complex in GG-NER"/>
</dbReference>
<dbReference type="Reactome" id="R-RNO-5696400">
    <property type="pathway name" value="Dual Incision in GG-NER"/>
</dbReference>
<dbReference type="Reactome" id="R-RNO-674695">
    <property type="pathway name" value="RNA Polymerase II Pre-transcription Events"/>
</dbReference>
<dbReference type="Reactome" id="R-RNO-6781823">
    <property type="pathway name" value="Formation of TC-NER Pre-Incision Complex"/>
</dbReference>
<dbReference type="Reactome" id="R-RNO-6782135">
    <property type="pathway name" value="Dual incision in TC-NER"/>
</dbReference>
<dbReference type="Reactome" id="R-RNO-6782210">
    <property type="pathway name" value="Gap-filling DNA repair synthesis and ligation in TC-NER"/>
</dbReference>
<dbReference type="Reactome" id="R-RNO-6796648">
    <property type="pathway name" value="TP53 Regulates Transcription of DNA Repair Genes"/>
</dbReference>
<dbReference type="Reactome" id="R-RNO-72086">
    <property type="pathway name" value="mRNA Capping"/>
</dbReference>
<dbReference type="Reactome" id="R-RNO-73762">
    <property type="pathway name" value="RNA Polymerase I Transcription Initiation"/>
</dbReference>
<dbReference type="Reactome" id="R-RNO-73772">
    <property type="pathway name" value="RNA Polymerase I Promoter Escape"/>
</dbReference>
<dbReference type="Reactome" id="R-RNO-73776">
    <property type="pathway name" value="RNA Polymerase II Promoter Escape"/>
</dbReference>
<dbReference type="Reactome" id="R-RNO-73779">
    <property type="pathway name" value="RNA Polymerase II Transcription Pre-Initiation And Promoter Opening"/>
</dbReference>
<dbReference type="Reactome" id="R-RNO-73863">
    <property type="pathway name" value="RNA Polymerase I Transcription Termination"/>
</dbReference>
<dbReference type="Reactome" id="R-RNO-75953">
    <property type="pathway name" value="RNA Polymerase II Transcription Initiation"/>
</dbReference>
<dbReference type="Reactome" id="R-RNO-75955">
    <property type="pathway name" value="RNA Polymerase II Transcription Elongation"/>
</dbReference>
<dbReference type="Reactome" id="R-RNO-76042">
    <property type="pathway name" value="RNA Polymerase II Transcription Initiation And Promoter Clearance"/>
</dbReference>
<dbReference type="Reactome" id="R-RNO-77075">
    <property type="pathway name" value="RNA Pol II CTD phosphorylation and interaction with CE"/>
</dbReference>
<dbReference type="PRO" id="PR:Q4G005"/>
<dbReference type="Proteomes" id="UP000002494">
    <property type="component" value="Chromosome 18"/>
</dbReference>
<dbReference type="Bgee" id="ENSRNOG00000013180">
    <property type="expression patterns" value="Expressed in spleen and 19 other cell types or tissues"/>
</dbReference>
<dbReference type="GO" id="GO:0000112">
    <property type="term" value="C:nucleotide-excision repair factor 3 complex"/>
    <property type="evidence" value="ECO:0000318"/>
    <property type="project" value="GO_Central"/>
</dbReference>
<dbReference type="GO" id="GO:0005669">
    <property type="term" value="C:transcription factor TFIID complex"/>
    <property type="evidence" value="ECO:0000266"/>
    <property type="project" value="RGD"/>
</dbReference>
<dbReference type="GO" id="GO:0000439">
    <property type="term" value="C:transcription factor TFIIH core complex"/>
    <property type="evidence" value="ECO:0000314"/>
    <property type="project" value="RGD"/>
</dbReference>
<dbReference type="GO" id="GO:0005675">
    <property type="term" value="C:transcription factor TFIIH holo complex"/>
    <property type="evidence" value="ECO:0000250"/>
    <property type="project" value="UniProtKB"/>
</dbReference>
<dbReference type="GO" id="GO:0097550">
    <property type="term" value="C:transcription preinitiation complex"/>
    <property type="evidence" value="ECO:0000318"/>
    <property type="project" value="GO_Central"/>
</dbReference>
<dbReference type="GO" id="GO:0043138">
    <property type="term" value="F:3'-5' DNA helicase activity"/>
    <property type="evidence" value="ECO:0000266"/>
    <property type="project" value="RGD"/>
</dbReference>
<dbReference type="GO" id="GO:0005524">
    <property type="term" value="F:ATP binding"/>
    <property type="evidence" value="ECO:0007669"/>
    <property type="project" value="UniProtKB-KW"/>
</dbReference>
<dbReference type="GO" id="GO:0016887">
    <property type="term" value="F:ATP hydrolysis activity"/>
    <property type="evidence" value="ECO:0000266"/>
    <property type="project" value="RGD"/>
</dbReference>
<dbReference type="GO" id="GO:0003677">
    <property type="term" value="F:DNA binding"/>
    <property type="evidence" value="ECO:0007669"/>
    <property type="project" value="UniProtKB-KW"/>
</dbReference>
<dbReference type="GO" id="GO:1990841">
    <property type="term" value="F:promoter-specific chromatin binding"/>
    <property type="evidence" value="ECO:0000266"/>
    <property type="project" value="RGD"/>
</dbReference>
<dbReference type="GO" id="GO:0006915">
    <property type="term" value="P:apoptotic process"/>
    <property type="evidence" value="ECO:0000266"/>
    <property type="project" value="RGD"/>
</dbReference>
<dbReference type="GO" id="GO:0006281">
    <property type="term" value="P:DNA repair"/>
    <property type="evidence" value="ECO:0000266"/>
    <property type="project" value="RGD"/>
</dbReference>
<dbReference type="GO" id="GO:0006265">
    <property type="term" value="P:DNA topological change"/>
    <property type="evidence" value="ECO:0000266"/>
    <property type="project" value="RGD"/>
</dbReference>
<dbReference type="GO" id="GO:0048568">
    <property type="term" value="P:embryonic organ development"/>
    <property type="evidence" value="ECO:0000270"/>
    <property type="project" value="RGD"/>
</dbReference>
<dbReference type="GO" id="GO:0035315">
    <property type="term" value="P:hair cell differentiation"/>
    <property type="evidence" value="ECO:0000266"/>
    <property type="project" value="RGD"/>
</dbReference>
<dbReference type="GO" id="GO:0006289">
    <property type="term" value="P:nucleotide-excision repair"/>
    <property type="evidence" value="ECO:0000266"/>
    <property type="project" value="RGD"/>
</dbReference>
<dbReference type="GO" id="GO:0043065">
    <property type="term" value="P:positive regulation of apoptotic process"/>
    <property type="evidence" value="ECO:0000266"/>
    <property type="project" value="RGD"/>
</dbReference>
<dbReference type="GO" id="GO:0008104">
    <property type="term" value="P:protein localization"/>
    <property type="evidence" value="ECO:0000266"/>
    <property type="project" value="RGD"/>
</dbReference>
<dbReference type="GO" id="GO:1901990">
    <property type="term" value="P:regulation of mitotic cell cycle phase transition"/>
    <property type="evidence" value="ECO:0000266"/>
    <property type="project" value="RGD"/>
</dbReference>
<dbReference type="GO" id="GO:0001666">
    <property type="term" value="P:response to hypoxia"/>
    <property type="evidence" value="ECO:0000270"/>
    <property type="project" value="RGD"/>
</dbReference>
<dbReference type="GO" id="GO:0006979">
    <property type="term" value="P:response to oxidative stress"/>
    <property type="evidence" value="ECO:0000266"/>
    <property type="project" value="RGD"/>
</dbReference>
<dbReference type="GO" id="GO:0009411">
    <property type="term" value="P:response to UV"/>
    <property type="evidence" value="ECO:0000266"/>
    <property type="project" value="RGD"/>
</dbReference>
<dbReference type="GO" id="GO:0006366">
    <property type="term" value="P:transcription by RNA polymerase II"/>
    <property type="evidence" value="ECO:0000250"/>
    <property type="project" value="UniProtKB"/>
</dbReference>
<dbReference type="GO" id="GO:0006362">
    <property type="term" value="P:transcription elongation by RNA polymerase I"/>
    <property type="evidence" value="ECO:0000266"/>
    <property type="project" value="RGD"/>
</dbReference>
<dbReference type="GO" id="GO:0006367">
    <property type="term" value="P:transcription initiation at RNA polymerase II promoter"/>
    <property type="evidence" value="ECO:0000266"/>
    <property type="project" value="RGD"/>
</dbReference>
<dbReference type="GO" id="GO:0006283">
    <property type="term" value="P:transcription-coupled nucleotide-excision repair"/>
    <property type="evidence" value="ECO:0000266"/>
    <property type="project" value="RGD"/>
</dbReference>
<dbReference type="GO" id="GO:0009650">
    <property type="term" value="P:UV protection"/>
    <property type="evidence" value="ECO:0000266"/>
    <property type="project" value="RGD"/>
</dbReference>
<dbReference type="CDD" id="cd18029">
    <property type="entry name" value="DEXHc_XPB"/>
    <property type="match status" value="1"/>
</dbReference>
<dbReference type="CDD" id="cd18789">
    <property type="entry name" value="SF2_C_XPB"/>
    <property type="match status" value="1"/>
</dbReference>
<dbReference type="FunFam" id="3.40.50.300:FF:000077">
    <property type="entry name" value="Probable DNA repair helicase RAD25"/>
    <property type="match status" value="1"/>
</dbReference>
<dbReference type="FunFam" id="3.40.50.300:FF:000117">
    <property type="entry name" value="Putative DNA repair helicase rad25"/>
    <property type="match status" value="1"/>
</dbReference>
<dbReference type="Gene3D" id="3.40.50.300">
    <property type="entry name" value="P-loop containing nucleotide triphosphate hydrolases"/>
    <property type="match status" value="2"/>
</dbReference>
<dbReference type="InterPro" id="IPR050615">
    <property type="entry name" value="ATP-dep_DNA_Helicase"/>
</dbReference>
<dbReference type="InterPro" id="IPR032438">
    <property type="entry name" value="ERCC3_RAD25_C"/>
</dbReference>
<dbReference type="InterPro" id="IPR006935">
    <property type="entry name" value="Helicase/UvrB_N"/>
</dbReference>
<dbReference type="InterPro" id="IPR014001">
    <property type="entry name" value="Helicase_ATP-bd"/>
</dbReference>
<dbReference type="InterPro" id="IPR001650">
    <property type="entry name" value="Helicase_C-like"/>
</dbReference>
<dbReference type="InterPro" id="IPR027417">
    <property type="entry name" value="P-loop_NTPase"/>
</dbReference>
<dbReference type="InterPro" id="IPR001161">
    <property type="entry name" value="XPB/Ssl2"/>
</dbReference>
<dbReference type="InterPro" id="IPR032830">
    <property type="entry name" value="XPB/Ssl2_N"/>
</dbReference>
<dbReference type="NCBIfam" id="TIGR00603">
    <property type="entry name" value="rad25"/>
    <property type="match status" value="1"/>
</dbReference>
<dbReference type="PANTHER" id="PTHR11274:SF0">
    <property type="entry name" value="GENERAL TRANSCRIPTION AND DNA REPAIR FACTOR IIH HELICASE SUBUNIT XPB"/>
    <property type="match status" value="1"/>
</dbReference>
<dbReference type="PANTHER" id="PTHR11274">
    <property type="entry name" value="RAD25/XP-B DNA REPAIR HELICASE"/>
    <property type="match status" value="1"/>
</dbReference>
<dbReference type="Pfam" id="PF16203">
    <property type="entry name" value="ERCC3_RAD25_C"/>
    <property type="match status" value="1"/>
</dbReference>
<dbReference type="Pfam" id="PF13625">
    <property type="entry name" value="Helicase_C_3"/>
    <property type="match status" value="1"/>
</dbReference>
<dbReference type="Pfam" id="PF04851">
    <property type="entry name" value="ResIII"/>
    <property type="match status" value="1"/>
</dbReference>
<dbReference type="PRINTS" id="PR00851">
    <property type="entry name" value="XRODRMPGMNTB"/>
</dbReference>
<dbReference type="SMART" id="SM00487">
    <property type="entry name" value="DEXDc"/>
    <property type="match status" value="1"/>
</dbReference>
<dbReference type="SMART" id="SM00490">
    <property type="entry name" value="HELICc"/>
    <property type="match status" value="1"/>
</dbReference>
<dbReference type="SUPFAM" id="SSF52540">
    <property type="entry name" value="P-loop containing nucleoside triphosphate hydrolases"/>
    <property type="match status" value="2"/>
</dbReference>
<dbReference type="PROSITE" id="PS51192">
    <property type="entry name" value="HELICASE_ATP_BIND_1"/>
    <property type="match status" value="1"/>
</dbReference>
<dbReference type="PROSITE" id="PS51194">
    <property type="entry name" value="HELICASE_CTER"/>
    <property type="match status" value="1"/>
</dbReference>
<proteinExistence type="evidence at protein level"/>
<feature type="chain" id="PRO_0000323742" description="General transcription and DNA repair factor IIH helicase/translocase subunit XPB">
    <location>
        <begin position="1"/>
        <end position="782"/>
    </location>
</feature>
<feature type="domain" description="Helicase ATP-binding" evidence="4">
    <location>
        <begin position="328"/>
        <end position="489"/>
    </location>
</feature>
<feature type="domain" description="Helicase C-terminal" evidence="5">
    <location>
        <begin position="543"/>
        <end position="703"/>
    </location>
</feature>
<feature type="region of interest" description="Disordered" evidence="6">
    <location>
        <begin position="1"/>
        <end position="52"/>
    </location>
</feature>
<feature type="short sequence motif" description="Nuclear localization signal" evidence="3">
    <location>
        <begin position="6"/>
        <end position="18"/>
    </location>
</feature>
<feature type="short sequence motif" description="DEVH box">
    <location>
        <begin position="442"/>
        <end position="445"/>
    </location>
</feature>
<feature type="compositionally biased region" description="Basic and acidic residues" evidence="6">
    <location>
        <begin position="1"/>
        <end position="11"/>
    </location>
</feature>
<feature type="compositionally biased region" description="Acidic residues" evidence="6">
    <location>
        <begin position="20"/>
        <end position="30"/>
    </location>
</feature>
<feature type="binding site" evidence="4">
    <location>
        <begin position="341"/>
        <end position="348"/>
    </location>
    <ligand>
        <name>ATP</name>
        <dbReference type="ChEBI" id="CHEBI:30616"/>
    </ligand>
</feature>
<feature type="modified residue" description="Phosphoserine" evidence="8">
    <location>
        <position position="34"/>
    </location>
</feature>
<feature type="modified residue" description="Phosphoserine" evidence="2">
    <location>
        <position position="686"/>
    </location>
</feature>
<feature type="modified residue" description="Phosphoserine; by CK2" evidence="2">
    <location>
        <position position="751"/>
    </location>
</feature>
<organism>
    <name type="scientific">Rattus norvegicus</name>
    <name type="common">Rat</name>
    <dbReference type="NCBI Taxonomy" id="10116"/>
    <lineage>
        <taxon>Eukaryota</taxon>
        <taxon>Metazoa</taxon>
        <taxon>Chordata</taxon>
        <taxon>Craniata</taxon>
        <taxon>Vertebrata</taxon>
        <taxon>Euteleostomi</taxon>
        <taxon>Mammalia</taxon>
        <taxon>Eutheria</taxon>
        <taxon>Euarchontoglires</taxon>
        <taxon>Glires</taxon>
        <taxon>Rodentia</taxon>
        <taxon>Myomorpha</taxon>
        <taxon>Muroidea</taxon>
        <taxon>Muridae</taxon>
        <taxon>Murinae</taxon>
        <taxon>Rattus</taxon>
    </lineage>
</organism>
<comment type="function">
    <text evidence="2">ATP-dependent 3'-5' DNA helicase/translocase; binds dsDNA rather than ssDNA, unzipping it in a translocase rather than classical helicase activity. Component of the general transcription and DNA repair factor IIH (TFIIH) core complex. When complexed to CDK-activating kinase (CAK), involved in RNA transcription by RNA polymerase II. The ATPase activity of XPB/ERCC3, but not its helicase activity, is required for DNA opening; it may wrap around the damaged DNA wedging it open, causing localized melting and twisting that allows XPD/ERCC2 helicase to anchor. The ATP-dependent helicase activity of XPB/ERCC3 may be required for promoter escape. Also involved in transcription-coupled nucleotide excision repair (NER) of damaged DNA. In NER, TFIIH acts by opening DNA around the lesion to allow the excision of the damaged oligonucleotide and its replacement by a new DNA fragment. The structure of the TFIIH transcription complex differs from the NER-TFIIH complex; large movements by XPD/ERCC2 and XPB/ERCC3 are stabilized by XPA.</text>
</comment>
<comment type="catalytic activity">
    <reaction evidence="2">
        <text>Couples ATP hydrolysis with the unwinding of duplex DNA by translocating in the 3'-5' direction.</text>
        <dbReference type="EC" id="5.6.2.4"/>
    </reaction>
</comment>
<comment type="catalytic activity">
    <reaction evidence="2">
        <text>ATP + H2O = ADP + phosphate + H(+)</text>
        <dbReference type="Rhea" id="RHEA:13065"/>
        <dbReference type="ChEBI" id="CHEBI:15377"/>
        <dbReference type="ChEBI" id="CHEBI:15378"/>
        <dbReference type="ChEBI" id="CHEBI:30616"/>
        <dbReference type="ChEBI" id="CHEBI:43474"/>
        <dbReference type="ChEBI" id="CHEBI:456216"/>
        <dbReference type="EC" id="5.6.2.4"/>
    </reaction>
</comment>
<comment type="activity regulation">
    <text evidence="2">Phosphorylation on Ser-751 by CK2 controls the 5'-excision activity of ERCC1-XPF endonuclease; phosphorylated protein inhibits the excision activity and thus NER. ATPase activity is stimulated by TFIIH subunit p52 (GTF2H4). DNA translocase activity by this subunit in TFIIH is stimulated by XPA, ERCC5/XPG and XFP plus ERCC1.</text>
</comment>
<comment type="subunit">
    <text evidence="2">Component of the 7-subunit TFIIH core complex composed of XPB/ERCC3, XPD/ERCC2, GTF2H1, GTF2H2, GTF2H3, GTF2H4 and GTF2H5, which is active in NER. The core complex associates with the 3-subunit CDK-activating kinase (CAK) module composed of CCNH/cyclin H, CDK7 and MNAT1 to form the 10-subunit holoenzyme (holo-TFIIH) active in transcription. Interacts with PUF60. Interacts with ATF7IP. Interacts with KAT2A; leading to KAT2A recruitment to promoters and acetylation of histones. Part of TBP-based Pol II pre-initiation complex (PIC), in which Pol II core assembles with general transcription factors and other specific initiation factors including GTF2E1, GTF2E2, GTF2F1, GTF2F2, TCEA1, ERCC2, ERCC3, GTF2H2, GTF2H3, GTF2H4, GTF2H5, GTF2A1, GTF2A2, GTF2B and TBP; this large multi-subunit PIC complex mediates DNA unwinding and targets Pol II core to the transcription start site where the first phosphodiester bond forms.</text>
</comment>
<comment type="subcellular location">
    <subcellularLocation>
        <location evidence="1">Nucleus</location>
    </subcellularLocation>
</comment>
<comment type="PTM">
    <text evidence="2">Phosphorylation on Ser-751 by CK2 controls the 5'-excision activity of ERCC1-XPF endonuclease; phosphorylated protein inhibits the excision activity and thus NER. Dephosphorylation reactivates the 5'-excision step. Phosphorylation has no effect on transcription or the 3'-5' helicase activity.</text>
</comment>
<comment type="similarity">
    <text evidence="7">Belongs to the helicase family. RAD25/XPB subfamily.</text>
</comment>
<reference key="1">
    <citation type="journal article" date="2004" name="Genome Res.">
        <title>The status, quality, and expansion of the NIH full-length cDNA project: the Mammalian Gene Collection (MGC).</title>
        <authorList>
            <consortium name="The MGC Project Team"/>
        </authorList>
    </citation>
    <scope>NUCLEOTIDE SEQUENCE [LARGE SCALE MRNA]</scope>
    <source>
        <tissue>Thymus</tissue>
    </source>
</reference>
<reference key="2">
    <citation type="journal article" date="2012" name="Nat. Commun.">
        <title>Quantitative maps of protein phosphorylation sites across 14 different rat organs and tissues.</title>
        <authorList>
            <person name="Lundby A."/>
            <person name="Secher A."/>
            <person name="Lage K."/>
            <person name="Nordsborg N.B."/>
            <person name="Dmytriyev A."/>
            <person name="Lundby C."/>
            <person name="Olsen J.V."/>
        </authorList>
    </citation>
    <scope>PHOSPHORYLATION [LARGE SCALE ANALYSIS] AT SER-34</scope>
    <scope>IDENTIFICATION BY MASS SPECTROMETRY [LARGE SCALE ANALYSIS]</scope>
</reference>
<evidence type="ECO:0000250" key="1"/>
<evidence type="ECO:0000250" key="2">
    <source>
        <dbReference type="UniProtKB" id="P19447"/>
    </source>
</evidence>
<evidence type="ECO:0000255" key="3"/>
<evidence type="ECO:0000255" key="4">
    <source>
        <dbReference type="PROSITE-ProRule" id="PRU00541"/>
    </source>
</evidence>
<evidence type="ECO:0000255" key="5">
    <source>
        <dbReference type="PROSITE-ProRule" id="PRU00542"/>
    </source>
</evidence>
<evidence type="ECO:0000256" key="6">
    <source>
        <dbReference type="SAM" id="MobiDB-lite"/>
    </source>
</evidence>
<evidence type="ECO:0000305" key="7"/>
<evidence type="ECO:0007744" key="8">
    <source>
    </source>
</evidence>
<gene>
    <name type="primary">Ercc3</name>
</gene>